<dbReference type="EMBL" id="AF003196">
    <property type="protein sequence ID" value="AAB61231.1"/>
    <property type="molecule type" value="Genomic_DNA"/>
</dbReference>
<dbReference type="SMR" id="O07816"/>
<dbReference type="GO" id="GO:1990904">
    <property type="term" value="C:ribonucleoprotein complex"/>
    <property type="evidence" value="ECO:0007669"/>
    <property type="project" value="UniProtKB-KW"/>
</dbReference>
<dbReference type="GO" id="GO:0005840">
    <property type="term" value="C:ribosome"/>
    <property type="evidence" value="ECO:0007669"/>
    <property type="project" value="UniProtKB-KW"/>
</dbReference>
<dbReference type="GO" id="GO:0019843">
    <property type="term" value="F:rRNA binding"/>
    <property type="evidence" value="ECO:0007669"/>
    <property type="project" value="UniProtKB-UniRule"/>
</dbReference>
<dbReference type="GO" id="GO:0003735">
    <property type="term" value="F:structural constituent of ribosome"/>
    <property type="evidence" value="ECO:0007669"/>
    <property type="project" value="InterPro"/>
</dbReference>
<dbReference type="GO" id="GO:0006412">
    <property type="term" value="P:translation"/>
    <property type="evidence" value="ECO:0007669"/>
    <property type="project" value="UniProtKB-UniRule"/>
</dbReference>
<dbReference type="FunFam" id="3.10.430.100:FF:000010">
    <property type="entry name" value="50S ribosomal protein L9"/>
    <property type="match status" value="1"/>
</dbReference>
<dbReference type="Gene3D" id="3.10.430.100">
    <property type="entry name" value="Ribosomal protein L9, C-terminal domain"/>
    <property type="match status" value="1"/>
</dbReference>
<dbReference type="Gene3D" id="3.40.5.10">
    <property type="entry name" value="Ribosomal protein L9, N-terminal domain"/>
    <property type="match status" value="1"/>
</dbReference>
<dbReference type="HAMAP" id="MF_00503">
    <property type="entry name" value="Ribosomal_bL9"/>
    <property type="match status" value="1"/>
</dbReference>
<dbReference type="InterPro" id="IPR000244">
    <property type="entry name" value="Ribosomal_bL9"/>
</dbReference>
<dbReference type="InterPro" id="IPR009027">
    <property type="entry name" value="Ribosomal_bL9/RNase_H1_N"/>
</dbReference>
<dbReference type="InterPro" id="IPR020594">
    <property type="entry name" value="Ribosomal_bL9_bac/chp"/>
</dbReference>
<dbReference type="InterPro" id="IPR020069">
    <property type="entry name" value="Ribosomal_bL9_C"/>
</dbReference>
<dbReference type="InterPro" id="IPR036791">
    <property type="entry name" value="Ribosomal_bL9_C_sf"/>
</dbReference>
<dbReference type="InterPro" id="IPR020070">
    <property type="entry name" value="Ribosomal_bL9_N"/>
</dbReference>
<dbReference type="InterPro" id="IPR036935">
    <property type="entry name" value="Ribosomal_bL9_N_sf"/>
</dbReference>
<dbReference type="NCBIfam" id="TIGR00158">
    <property type="entry name" value="L9"/>
    <property type="match status" value="1"/>
</dbReference>
<dbReference type="PANTHER" id="PTHR21368">
    <property type="entry name" value="50S RIBOSOMAL PROTEIN L9"/>
    <property type="match status" value="1"/>
</dbReference>
<dbReference type="Pfam" id="PF03948">
    <property type="entry name" value="Ribosomal_L9_C"/>
    <property type="match status" value="1"/>
</dbReference>
<dbReference type="Pfam" id="PF01281">
    <property type="entry name" value="Ribosomal_L9_N"/>
    <property type="match status" value="1"/>
</dbReference>
<dbReference type="SUPFAM" id="SSF55658">
    <property type="entry name" value="L9 N-domain-like"/>
    <property type="match status" value="1"/>
</dbReference>
<dbReference type="SUPFAM" id="SSF55653">
    <property type="entry name" value="Ribosomal protein L9 C-domain"/>
    <property type="match status" value="1"/>
</dbReference>
<dbReference type="PROSITE" id="PS00651">
    <property type="entry name" value="RIBOSOMAL_L9"/>
    <property type="match status" value="1"/>
</dbReference>
<protein>
    <recommendedName>
        <fullName evidence="1">Large ribosomal subunit protein bL9</fullName>
    </recommendedName>
    <alternativeName>
        <fullName evidence="2">50S ribosomal protein L9</fullName>
    </alternativeName>
</protein>
<name>RL9_NEIGO</name>
<keyword id="KW-0687">Ribonucleoprotein</keyword>
<keyword id="KW-0689">Ribosomal protein</keyword>
<keyword id="KW-0694">RNA-binding</keyword>
<keyword id="KW-0699">rRNA-binding</keyword>
<reference key="1">
    <citation type="submission" date="1997-05" db="EMBL/GenBank/DDBJ databases">
        <authorList>
            <person name="Ropp P.A."/>
            <person name="Nicholas R.A."/>
        </authorList>
    </citation>
    <scope>NUCLEOTIDE SEQUENCE [GENOMIC DNA]</scope>
    <source>
        <strain>FA19</strain>
    </source>
</reference>
<evidence type="ECO:0000255" key="1">
    <source>
        <dbReference type="HAMAP-Rule" id="MF_00503"/>
    </source>
</evidence>
<evidence type="ECO:0000305" key="2"/>
<organism>
    <name type="scientific">Neisseria gonorrhoeae</name>
    <dbReference type="NCBI Taxonomy" id="485"/>
    <lineage>
        <taxon>Bacteria</taxon>
        <taxon>Pseudomonadati</taxon>
        <taxon>Pseudomonadota</taxon>
        <taxon>Betaproteobacteria</taxon>
        <taxon>Neisseriales</taxon>
        <taxon>Neisseriaceae</taxon>
        <taxon>Neisseria</taxon>
    </lineage>
</organism>
<feature type="chain" id="PRO_0000176657" description="Large ribosomal subunit protein bL9">
    <location>
        <begin position="1"/>
        <end position="150"/>
    </location>
</feature>
<comment type="function">
    <text evidence="1">Binds to the 23S rRNA.</text>
</comment>
<comment type="similarity">
    <text evidence="1">Belongs to the bacterial ribosomal protein bL9 family.</text>
</comment>
<sequence length="150" mass="15694">MQIILLEKIGGLGNLGDIVTVKNGYARNFLIPAGKAKRATEANMKEFEARRAELEAKQAEILADARARQEKLDGQTVTVAQKAGVDGRHNGSVTNADIAAAIVAAGIEAVKANVRLPNGPLKAVGEYEVEVALHTDAVAKITVAVIAAAE</sequence>
<gene>
    <name evidence="1" type="primary">rplI</name>
</gene>
<accession>O07816</accession>
<proteinExistence type="inferred from homology"/>